<keyword id="KW-0963">Cytoplasm</keyword>
<keyword id="KW-0648">Protein biosynthesis</keyword>
<keyword id="KW-1185">Reference proteome</keyword>
<dbReference type="EMBL" id="Z97369">
    <property type="protein sequence ID" value="CAB10670.1"/>
    <property type="molecule type" value="Genomic_DNA"/>
</dbReference>
<dbReference type="EMBL" id="AL583922">
    <property type="protein sequence ID" value="CAC30541.1"/>
    <property type="molecule type" value="Genomic_DNA"/>
</dbReference>
<dbReference type="PIR" id="H87107">
    <property type="entry name" value="H87107"/>
</dbReference>
<dbReference type="RefSeq" id="NP_302097.1">
    <property type="nucleotide sequence ID" value="NC_002677.1"/>
</dbReference>
<dbReference type="RefSeq" id="WP_010908418.1">
    <property type="nucleotide sequence ID" value="NC_002677.1"/>
</dbReference>
<dbReference type="SMR" id="O33046"/>
<dbReference type="STRING" id="272631.gene:17575431"/>
<dbReference type="KEGG" id="mle:ML1590"/>
<dbReference type="PATRIC" id="fig|272631.5.peg.2998"/>
<dbReference type="Leproma" id="ML1590"/>
<dbReference type="eggNOG" id="COG0233">
    <property type="taxonomic scope" value="Bacteria"/>
</dbReference>
<dbReference type="HOGENOM" id="CLU_073981_2_0_11"/>
<dbReference type="OrthoDB" id="9804006at2"/>
<dbReference type="Proteomes" id="UP000000806">
    <property type="component" value="Chromosome"/>
</dbReference>
<dbReference type="GO" id="GO:0005737">
    <property type="term" value="C:cytoplasm"/>
    <property type="evidence" value="ECO:0007669"/>
    <property type="project" value="UniProtKB-SubCell"/>
</dbReference>
<dbReference type="GO" id="GO:0043023">
    <property type="term" value="F:ribosomal large subunit binding"/>
    <property type="evidence" value="ECO:0007669"/>
    <property type="project" value="TreeGrafter"/>
</dbReference>
<dbReference type="GO" id="GO:0006415">
    <property type="term" value="P:translational termination"/>
    <property type="evidence" value="ECO:0007669"/>
    <property type="project" value="UniProtKB-UniRule"/>
</dbReference>
<dbReference type="CDD" id="cd00520">
    <property type="entry name" value="RRF"/>
    <property type="match status" value="1"/>
</dbReference>
<dbReference type="FunFam" id="1.10.132.20:FF:000001">
    <property type="entry name" value="Ribosome-recycling factor"/>
    <property type="match status" value="1"/>
</dbReference>
<dbReference type="FunFam" id="3.30.1360.40:FF:000001">
    <property type="entry name" value="Ribosome-recycling factor"/>
    <property type="match status" value="1"/>
</dbReference>
<dbReference type="Gene3D" id="3.30.1360.40">
    <property type="match status" value="1"/>
</dbReference>
<dbReference type="Gene3D" id="1.10.132.20">
    <property type="entry name" value="Ribosome-recycling factor"/>
    <property type="match status" value="1"/>
</dbReference>
<dbReference type="HAMAP" id="MF_00040">
    <property type="entry name" value="RRF"/>
    <property type="match status" value="1"/>
</dbReference>
<dbReference type="InterPro" id="IPR002661">
    <property type="entry name" value="Ribosome_recyc_fac"/>
</dbReference>
<dbReference type="InterPro" id="IPR023584">
    <property type="entry name" value="Ribosome_recyc_fac_dom"/>
</dbReference>
<dbReference type="InterPro" id="IPR036191">
    <property type="entry name" value="RRF_sf"/>
</dbReference>
<dbReference type="NCBIfam" id="TIGR00496">
    <property type="entry name" value="frr"/>
    <property type="match status" value="1"/>
</dbReference>
<dbReference type="PANTHER" id="PTHR20982:SF3">
    <property type="entry name" value="MITOCHONDRIAL RIBOSOME RECYCLING FACTOR PSEUDO 1"/>
    <property type="match status" value="1"/>
</dbReference>
<dbReference type="PANTHER" id="PTHR20982">
    <property type="entry name" value="RIBOSOME RECYCLING FACTOR"/>
    <property type="match status" value="1"/>
</dbReference>
<dbReference type="Pfam" id="PF01765">
    <property type="entry name" value="RRF"/>
    <property type="match status" value="1"/>
</dbReference>
<dbReference type="SUPFAM" id="SSF55194">
    <property type="entry name" value="Ribosome recycling factor, RRF"/>
    <property type="match status" value="1"/>
</dbReference>
<feature type="chain" id="PRO_0000167493" description="Ribosome-recycling factor">
    <location>
        <begin position="1"/>
        <end position="185"/>
    </location>
</feature>
<reference key="1">
    <citation type="journal article" date="2001" name="Nature">
        <title>Massive gene decay in the leprosy bacillus.</title>
        <authorList>
            <person name="Cole S.T."/>
            <person name="Eiglmeier K."/>
            <person name="Parkhill J."/>
            <person name="James K.D."/>
            <person name="Thomson N.R."/>
            <person name="Wheeler P.R."/>
            <person name="Honore N."/>
            <person name="Garnier T."/>
            <person name="Churcher C.M."/>
            <person name="Harris D.E."/>
            <person name="Mungall K.L."/>
            <person name="Basham D."/>
            <person name="Brown D."/>
            <person name="Chillingworth T."/>
            <person name="Connor R."/>
            <person name="Davies R.M."/>
            <person name="Devlin K."/>
            <person name="Duthoy S."/>
            <person name="Feltwell T."/>
            <person name="Fraser A."/>
            <person name="Hamlin N."/>
            <person name="Holroyd S."/>
            <person name="Hornsby T."/>
            <person name="Jagels K."/>
            <person name="Lacroix C."/>
            <person name="Maclean J."/>
            <person name="Moule S."/>
            <person name="Murphy L.D."/>
            <person name="Oliver K."/>
            <person name="Quail M.A."/>
            <person name="Rajandream M.A."/>
            <person name="Rutherford K.M."/>
            <person name="Rutter S."/>
            <person name="Seeger K."/>
            <person name="Simon S."/>
            <person name="Simmonds M."/>
            <person name="Skelton J."/>
            <person name="Squares R."/>
            <person name="Squares S."/>
            <person name="Stevens K."/>
            <person name="Taylor K."/>
            <person name="Whitehead S."/>
            <person name="Woodward J.R."/>
            <person name="Barrell B.G."/>
        </authorList>
    </citation>
    <scope>NUCLEOTIDE SEQUENCE [LARGE SCALE GENOMIC DNA]</scope>
    <source>
        <strain>TN</strain>
    </source>
</reference>
<sequence length="185" mass="20892">MIDEALFDAEEKMEKAVSVAREDLSMIRTGRANPGMFSRLVIDYYGSATPITQLASINVPEARLVVIKPYDAIQLHAIETAIRNSDLGVNPSNDGTLIRVAVPQLTEERRRELVKQAKCKGEDAKVSVRNIRRKVMEELHRIRKDGEAGEDEVSRAEKDLDKTTHQYVIQIDELVKHKEGELLEV</sequence>
<organism>
    <name type="scientific">Mycobacterium leprae (strain TN)</name>
    <dbReference type="NCBI Taxonomy" id="272631"/>
    <lineage>
        <taxon>Bacteria</taxon>
        <taxon>Bacillati</taxon>
        <taxon>Actinomycetota</taxon>
        <taxon>Actinomycetes</taxon>
        <taxon>Mycobacteriales</taxon>
        <taxon>Mycobacteriaceae</taxon>
        <taxon>Mycobacterium</taxon>
    </lineage>
</organism>
<protein>
    <recommendedName>
        <fullName evidence="1">Ribosome-recycling factor</fullName>
        <shortName evidence="1">RRF</shortName>
    </recommendedName>
    <alternativeName>
        <fullName evidence="1">Ribosome-releasing factor</fullName>
    </alternativeName>
</protein>
<evidence type="ECO:0000255" key="1">
    <source>
        <dbReference type="HAMAP-Rule" id="MF_00040"/>
    </source>
</evidence>
<comment type="function">
    <text evidence="1">Responsible for the release of ribosomes from messenger RNA at the termination of protein biosynthesis. May increase the efficiency of translation by recycling ribosomes from one round of translation to another.</text>
</comment>
<comment type="subcellular location">
    <subcellularLocation>
        <location evidence="1">Cytoplasm</location>
    </subcellularLocation>
</comment>
<comment type="similarity">
    <text evidence="1">Belongs to the RRF family.</text>
</comment>
<gene>
    <name evidence="1" type="primary">frr</name>
    <name type="ordered locus">ML1590</name>
    <name type="ORF">MLCB250.76</name>
</gene>
<accession>O33046</accession>
<name>RRF_MYCLE</name>
<proteinExistence type="inferred from homology"/>